<proteinExistence type="evidence at protein level"/>
<evidence type="ECO:0000269" key="1">
    <source>
    </source>
</evidence>
<evidence type="ECO:0000303" key="2">
    <source>
    </source>
</evidence>
<evidence type="ECO:0000305" key="3"/>
<evidence type="ECO:0000305" key="4">
    <source>
    </source>
</evidence>
<evidence type="ECO:0000312" key="5">
    <source>
        <dbReference type="HGNC" id="HGNC:21408"/>
    </source>
</evidence>
<evidence type="ECO:0007829" key="6">
    <source>
        <dbReference type="PDB" id="7YH4"/>
    </source>
</evidence>
<keyword id="KW-0002">3D-structure</keyword>
<keyword id="KW-0121">Carboxypeptidase</keyword>
<keyword id="KW-0378">Hydrolase</keyword>
<keyword id="KW-0645">Protease</keyword>
<keyword id="KW-1267">Proteomics identification</keyword>
<keyword id="KW-1185">Reference proteome</keyword>
<dbReference type="EC" id="3.4.13.4" evidence="1"/>
<dbReference type="EMBL" id="AK302464">
    <property type="protein sequence ID" value="BAG63754.1"/>
    <property type="molecule type" value="mRNA"/>
</dbReference>
<dbReference type="EMBL" id="AL353135">
    <property type="status" value="NOT_ANNOTATED_CDS"/>
    <property type="molecule type" value="Genomic_DNA"/>
</dbReference>
<dbReference type="EMBL" id="CH471051">
    <property type="protein sequence ID" value="EAW48559.1"/>
    <property type="molecule type" value="Genomic_DNA"/>
</dbReference>
<dbReference type="EMBL" id="BC035036">
    <property type="protein sequence ID" value="AAH35036.2"/>
    <property type="molecule type" value="mRNA"/>
</dbReference>
<dbReference type="EMBL" id="BC045583">
    <property type="protein sequence ID" value="AAH45583.1"/>
    <property type="molecule type" value="mRNA"/>
</dbReference>
<dbReference type="EMBL" id="BX640865">
    <property type="protein sequence ID" value="CAE45925.1"/>
    <property type="molecule type" value="mRNA"/>
</dbReference>
<dbReference type="CCDS" id="CCDS34499.1"/>
<dbReference type="RefSeq" id="NP_001010853.1">
    <property type="nucleotide sequence ID" value="NM_001010853.3"/>
</dbReference>
<dbReference type="PDB" id="7YH4">
    <property type="method" value="X-ray"/>
    <property type="resolution" value="2.03 A"/>
    <property type="chains" value="A=20-436"/>
</dbReference>
<dbReference type="PDB" id="8XZC">
    <property type="method" value="X-ray"/>
    <property type="resolution" value="2.35 A"/>
    <property type="chains" value="A=20-436"/>
</dbReference>
<dbReference type="PDBsum" id="7YH4"/>
<dbReference type="PDBsum" id="8XZC"/>
<dbReference type="SMR" id="Q8IYS1"/>
<dbReference type="BioGRID" id="126427">
    <property type="interactions" value="70"/>
</dbReference>
<dbReference type="FunCoup" id="Q8IYS1">
    <property type="interactions" value="374"/>
</dbReference>
<dbReference type="IntAct" id="Q8IYS1">
    <property type="interactions" value="43"/>
</dbReference>
<dbReference type="STRING" id="9606.ENSP00000275072"/>
<dbReference type="MEROPS" id="M20.021"/>
<dbReference type="GlyGen" id="Q8IYS1">
    <property type="glycosylation" value="1 site, 1 O-linked glycan (1 site)"/>
</dbReference>
<dbReference type="iPTMnet" id="Q8IYS1"/>
<dbReference type="PhosphoSitePlus" id="Q8IYS1"/>
<dbReference type="BioMuta" id="PM20D2"/>
<dbReference type="DMDM" id="121944459"/>
<dbReference type="jPOST" id="Q8IYS1"/>
<dbReference type="MassIVE" id="Q8IYS1"/>
<dbReference type="PaxDb" id="9606-ENSP00000275072"/>
<dbReference type="PeptideAtlas" id="Q8IYS1"/>
<dbReference type="ProteomicsDB" id="71220"/>
<dbReference type="Pumba" id="Q8IYS1"/>
<dbReference type="Antibodypedia" id="31855">
    <property type="antibodies" value="102 antibodies from 21 providers"/>
</dbReference>
<dbReference type="DNASU" id="135293"/>
<dbReference type="Ensembl" id="ENST00000275072.5">
    <property type="protein sequence ID" value="ENSP00000275072.4"/>
    <property type="gene ID" value="ENSG00000146281.6"/>
</dbReference>
<dbReference type="GeneID" id="135293"/>
<dbReference type="KEGG" id="hsa:135293"/>
<dbReference type="MANE-Select" id="ENST00000275072.5">
    <property type="protein sequence ID" value="ENSP00000275072.4"/>
    <property type="RefSeq nucleotide sequence ID" value="NM_001010853.3"/>
    <property type="RefSeq protein sequence ID" value="NP_001010853.1"/>
</dbReference>
<dbReference type="UCSC" id="uc003pmz.6">
    <property type="organism name" value="human"/>
</dbReference>
<dbReference type="AGR" id="HGNC:21408"/>
<dbReference type="CTD" id="135293"/>
<dbReference type="GeneCards" id="PM20D2"/>
<dbReference type="HGNC" id="HGNC:21408">
    <property type="gene designation" value="PM20D2"/>
</dbReference>
<dbReference type="HPA" id="ENSG00000146281">
    <property type="expression patterns" value="Low tissue specificity"/>
</dbReference>
<dbReference type="MIM" id="615913">
    <property type="type" value="gene"/>
</dbReference>
<dbReference type="neXtProt" id="NX_Q8IYS1"/>
<dbReference type="OpenTargets" id="ENSG00000146281"/>
<dbReference type="PharmGKB" id="PA162399803"/>
<dbReference type="VEuPathDB" id="HostDB:ENSG00000146281"/>
<dbReference type="eggNOG" id="ENOG502QQPD">
    <property type="taxonomic scope" value="Eukaryota"/>
</dbReference>
<dbReference type="GeneTree" id="ENSGT00390000003365"/>
<dbReference type="HOGENOM" id="CLU_031812_1_1_1"/>
<dbReference type="InParanoid" id="Q8IYS1"/>
<dbReference type="OMA" id="HRSCAKT"/>
<dbReference type="OrthoDB" id="6119954at2759"/>
<dbReference type="PAN-GO" id="Q8IYS1">
    <property type="GO annotations" value="1 GO annotation based on evolutionary models"/>
</dbReference>
<dbReference type="PhylomeDB" id="Q8IYS1"/>
<dbReference type="TreeFam" id="TF332656"/>
<dbReference type="PathwayCommons" id="Q8IYS1"/>
<dbReference type="SignaLink" id="Q8IYS1"/>
<dbReference type="BioGRID-ORCS" id="135293">
    <property type="hits" value="8 hits in 1085 CRISPR screens"/>
</dbReference>
<dbReference type="ChiTaRS" id="PM20D2">
    <property type="organism name" value="human"/>
</dbReference>
<dbReference type="GenomeRNAi" id="135293"/>
<dbReference type="Pharos" id="Q8IYS1">
    <property type="development level" value="Tdark"/>
</dbReference>
<dbReference type="PRO" id="PR:Q8IYS1"/>
<dbReference type="Proteomes" id="UP000005640">
    <property type="component" value="Chromosome 6"/>
</dbReference>
<dbReference type="RNAct" id="Q8IYS1">
    <property type="molecule type" value="protein"/>
</dbReference>
<dbReference type="Bgee" id="ENSG00000146281">
    <property type="expression patterns" value="Expressed in tibialis anterior and 194 other cell types or tissues"/>
</dbReference>
<dbReference type="GO" id="GO:0005654">
    <property type="term" value="C:nucleoplasm"/>
    <property type="evidence" value="ECO:0000314"/>
    <property type="project" value="HPA"/>
</dbReference>
<dbReference type="GO" id="GO:0004180">
    <property type="term" value="F:carboxypeptidase activity"/>
    <property type="evidence" value="ECO:0007669"/>
    <property type="project" value="UniProtKB-KW"/>
</dbReference>
<dbReference type="GO" id="GO:0016805">
    <property type="term" value="F:dipeptidase activity"/>
    <property type="evidence" value="ECO:0000314"/>
    <property type="project" value="MGI"/>
</dbReference>
<dbReference type="GO" id="GO:0042802">
    <property type="term" value="F:identical protein binding"/>
    <property type="evidence" value="ECO:0000353"/>
    <property type="project" value="IntAct"/>
</dbReference>
<dbReference type="GO" id="GO:0006508">
    <property type="term" value="P:proteolysis"/>
    <property type="evidence" value="ECO:0000314"/>
    <property type="project" value="MGI"/>
</dbReference>
<dbReference type="GO" id="GO:0051246">
    <property type="term" value="P:regulation of protein metabolic process"/>
    <property type="evidence" value="ECO:0000314"/>
    <property type="project" value="MGI"/>
</dbReference>
<dbReference type="CDD" id="cd05672">
    <property type="entry name" value="M20_ACY1L2-like"/>
    <property type="match status" value="1"/>
</dbReference>
<dbReference type="FunFam" id="3.30.70.360:FF:000004">
    <property type="entry name" value="Peptidase M20 domain-containing protein 2"/>
    <property type="match status" value="1"/>
</dbReference>
<dbReference type="FunFam" id="3.40.630.10:FF:000039">
    <property type="entry name" value="Peptidase M20 domain-containing protein 2"/>
    <property type="match status" value="1"/>
</dbReference>
<dbReference type="Gene3D" id="3.30.70.360">
    <property type="match status" value="1"/>
</dbReference>
<dbReference type="Gene3D" id="3.40.630.10">
    <property type="entry name" value="Zn peptidases"/>
    <property type="match status" value="1"/>
</dbReference>
<dbReference type="InterPro" id="IPR036264">
    <property type="entry name" value="Bact_exopeptidase_dim_dom"/>
</dbReference>
<dbReference type="InterPro" id="IPR002933">
    <property type="entry name" value="Peptidase_M20"/>
</dbReference>
<dbReference type="InterPro" id="IPR052030">
    <property type="entry name" value="Peptidase_M20/M20A_hydrolases"/>
</dbReference>
<dbReference type="InterPro" id="IPR011650">
    <property type="entry name" value="Peptidase_M20_dimer"/>
</dbReference>
<dbReference type="InterPro" id="IPR017144">
    <property type="entry name" value="Xaa-Arg_dipeptidase"/>
</dbReference>
<dbReference type="PANTHER" id="PTHR30575">
    <property type="entry name" value="PEPTIDASE M20"/>
    <property type="match status" value="1"/>
</dbReference>
<dbReference type="PANTHER" id="PTHR30575:SF0">
    <property type="entry name" value="XAA-ARG DIPEPTIDASE"/>
    <property type="match status" value="1"/>
</dbReference>
<dbReference type="Pfam" id="PF07687">
    <property type="entry name" value="M20_dimer"/>
    <property type="match status" value="1"/>
</dbReference>
<dbReference type="Pfam" id="PF01546">
    <property type="entry name" value="Peptidase_M20"/>
    <property type="match status" value="1"/>
</dbReference>
<dbReference type="PIRSF" id="PIRSF037226">
    <property type="entry name" value="Amidohydrolase_ACY1L2_prd"/>
    <property type="match status" value="1"/>
</dbReference>
<dbReference type="SUPFAM" id="SSF55031">
    <property type="entry name" value="Bacterial exopeptidase dimerisation domain"/>
    <property type="match status" value="1"/>
</dbReference>
<dbReference type="SUPFAM" id="SSF53187">
    <property type="entry name" value="Zn-dependent exopeptidases"/>
    <property type="match status" value="1"/>
</dbReference>
<feature type="chain" id="PRO_0000286340" description="Xaa-Arg dipeptidase">
    <location>
        <begin position="1"/>
        <end position="436"/>
    </location>
</feature>
<feature type="sequence variant" id="VAR_032081" description="In dbSNP:rs10944433.">
    <original>K</original>
    <variation>E</variation>
    <location>
        <position position="333"/>
    </location>
</feature>
<feature type="sequence conflict" description="In Ref. 4; AAH45583." evidence="3" ref="4">
    <original>I</original>
    <variation>V</variation>
    <location>
        <position position="171"/>
    </location>
</feature>
<feature type="sequence conflict" description="In Ref. 4; AAH45583." evidence="3" ref="4">
    <original>H</original>
    <variation>N</variation>
    <location>
        <position position="189"/>
    </location>
</feature>
<feature type="sequence conflict" description="In Ref. 4; AAH45583." evidence="3" ref="4">
    <original>A</original>
    <variation>V</variation>
    <location>
        <position position="434"/>
    </location>
</feature>
<feature type="helix" evidence="6">
    <location>
        <begin position="20"/>
        <end position="33"/>
    </location>
</feature>
<feature type="helix" evidence="6">
    <location>
        <begin position="35"/>
        <end position="46"/>
    </location>
</feature>
<feature type="helix" evidence="6">
    <location>
        <begin position="56"/>
        <end position="68"/>
    </location>
</feature>
<feature type="turn" evidence="6">
    <location>
        <begin position="70"/>
        <end position="73"/>
    </location>
</feature>
<feature type="strand" evidence="6">
    <location>
        <begin position="74"/>
        <end position="80"/>
    </location>
</feature>
<feature type="strand" evidence="6">
    <location>
        <begin position="87"/>
        <end position="91"/>
    </location>
</feature>
<feature type="strand" evidence="6">
    <location>
        <begin position="106"/>
        <end position="112"/>
    </location>
</feature>
<feature type="turn" evidence="6">
    <location>
        <begin position="118"/>
        <end position="120"/>
    </location>
</feature>
<feature type="helix" evidence="6">
    <location>
        <begin position="126"/>
        <end position="145"/>
    </location>
</feature>
<feature type="strand" evidence="6">
    <location>
        <begin position="154"/>
        <end position="160"/>
    </location>
</feature>
<feature type="turn" evidence="6">
    <location>
        <begin position="164"/>
        <end position="167"/>
    </location>
</feature>
<feature type="helix" evidence="6">
    <location>
        <begin position="169"/>
        <end position="175"/>
    </location>
</feature>
<feature type="turn" evidence="6">
    <location>
        <begin position="176"/>
        <end position="181"/>
    </location>
</feature>
<feature type="strand" evidence="6">
    <location>
        <begin position="183"/>
        <end position="186"/>
    </location>
</feature>
<feature type="strand" evidence="6">
    <location>
        <begin position="189"/>
        <end position="193"/>
    </location>
</feature>
<feature type="strand" evidence="6">
    <location>
        <begin position="202"/>
        <end position="211"/>
    </location>
</feature>
<feature type="turn" evidence="6">
    <location>
        <begin position="217"/>
        <end position="219"/>
    </location>
</feature>
<feature type="helix" evidence="6">
    <location>
        <begin position="221"/>
        <end position="223"/>
    </location>
</feature>
<feature type="helix" evidence="6">
    <location>
        <begin position="227"/>
        <end position="241"/>
    </location>
</feature>
<feature type="helix" evidence="6">
    <location>
        <begin position="242"/>
        <end position="244"/>
    </location>
</feature>
<feature type="strand" evidence="6">
    <location>
        <begin position="250"/>
        <end position="257"/>
    </location>
</feature>
<feature type="strand" evidence="6">
    <location>
        <begin position="268"/>
        <end position="279"/>
    </location>
</feature>
<feature type="helix" evidence="6">
    <location>
        <begin position="280"/>
        <end position="301"/>
    </location>
</feature>
<feature type="strand" evidence="6">
    <location>
        <begin position="304"/>
        <end position="309"/>
    </location>
</feature>
<feature type="helix" evidence="6">
    <location>
        <begin position="321"/>
        <end position="334"/>
    </location>
</feature>
<feature type="helix" evidence="6">
    <location>
        <begin position="354"/>
        <end position="358"/>
    </location>
</feature>
<feature type="strand" evidence="6">
    <location>
        <begin position="367"/>
        <end position="369"/>
    </location>
</feature>
<feature type="helix" evidence="6">
    <location>
        <begin position="379"/>
        <end position="386"/>
    </location>
</feature>
<feature type="helix" evidence="6">
    <location>
        <begin position="389"/>
        <end position="410"/>
    </location>
</feature>
<feature type="helix" evidence="6">
    <location>
        <begin position="412"/>
        <end position="426"/>
    </location>
</feature>
<name>P20D2_HUMAN</name>
<gene>
    <name evidence="2 5" type="primary">PM20D2</name>
    <name type="synonym">ACY1L2</name>
</gene>
<sequence length="436" mass="47776">MRPGGERPVEGGACNGRSELELLKLRSAECIDEAAERLGALSRAIWSQPELAYEEHHAHRVLTHFFEREPPAASWAVQPHYQLPTAFRAEWEPPEARAPSATPRPLHLGFLCEYDALPGIGHACGHNLIAEVGAAAALGVRGALEGLPRPPPPVKVVVLGTPAEEDGGGKIDLIEAGAFTNLDVVFMAHPSQENAAYLPDMAEHDVTVKYYGKASHSASYPWEGLNALDAAVLAYNNLSVFRQQMKPTWRVHGIIKNGGVKPNIIPSYSELIYYFRAPSMKELQVLTKKAEDCFRAAALASGCTVEIKGGAHDYYNVLPNKSLWKAYMENGRKLGIEFISEDTMLNGPSGSTDFGNVSFVVPGIHPYFHIGSNALNHTEQYTEAAGSQEAQFYTLRTAKALAMTALDVIFKPELLEGIREDFKLKLQEEQFVNAVE</sequence>
<organism>
    <name type="scientific">Homo sapiens</name>
    <name type="common">Human</name>
    <dbReference type="NCBI Taxonomy" id="9606"/>
    <lineage>
        <taxon>Eukaryota</taxon>
        <taxon>Metazoa</taxon>
        <taxon>Chordata</taxon>
        <taxon>Craniata</taxon>
        <taxon>Vertebrata</taxon>
        <taxon>Euteleostomi</taxon>
        <taxon>Mammalia</taxon>
        <taxon>Eutheria</taxon>
        <taxon>Euarchontoglires</taxon>
        <taxon>Primates</taxon>
        <taxon>Haplorrhini</taxon>
        <taxon>Catarrhini</taxon>
        <taxon>Hominidae</taxon>
        <taxon>Homo</taxon>
    </lineage>
</organism>
<accession>Q8IYS1</accession>
<accession>B4DYJ2</accession>
<accession>Q5T7J9</accession>
<accession>Q6MZV2</accession>
<accession>Q86XD9</accession>
<protein>
    <recommendedName>
        <fullName>Xaa-Arg dipeptidase</fullName>
        <ecNumber evidence="1">3.4.13.4</ecNumber>
    </recommendedName>
    <alternativeName>
        <fullName evidence="2">Beta-Ala-Lys dipeptidase</fullName>
    </alternativeName>
</protein>
<comment type="function">
    <text evidence="1">Catalyzes the peptide bond hydrolysis in dipeptides having basic amino acids lysine, ornithine or arginine at C-terminus. Postulated to function in a metabolite repair mechanism by eliminating alternate dipeptide by-products formed during carnosine synthesis.</text>
</comment>
<comment type="catalytic activity">
    <reaction evidence="1">
        <text>beta-alanyl-L-lysine + H2O = beta-alanine + L-lysine</text>
        <dbReference type="Rhea" id="RHEA:59608"/>
        <dbReference type="ChEBI" id="CHEBI:15377"/>
        <dbReference type="ChEBI" id="CHEBI:32551"/>
        <dbReference type="ChEBI" id="CHEBI:57966"/>
        <dbReference type="ChEBI" id="CHEBI:143161"/>
        <dbReference type="EC" id="3.4.13.4"/>
    </reaction>
    <physiologicalReaction direction="left-to-right" evidence="4">
        <dbReference type="Rhea" id="RHEA:59609"/>
    </physiologicalReaction>
</comment>
<comment type="catalytic activity">
    <reaction evidence="1">
        <text>beta-alanyl-L-ornithine + H2O = beta-alanine + L-ornithine</text>
        <dbReference type="Rhea" id="RHEA:59612"/>
        <dbReference type="ChEBI" id="CHEBI:15377"/>
        <dbReference type="ChEBI" id="CHEBI:46911"/>
        <dbReference type="ChEBI" id="CHEBI:57966"/>
        <dbReference type="ChEBI" id="CHEBI:143162"/>
        <dbReference type="EC" id="3.4.13.4"/>
    </reaction>
    <physiologicalReaction direction="left-to-right" evidence="4">
        <dbReference type="Rhea" id="RHEA:59613"/>
    </physiologicalReaction>
</comment>
<comment type="catalytic activity">
    <reaction evidence="1">
        <text>N(2)-(4-aminobutanoyl)-L-lysine + H2O = 4-aminobutanoate + L-lysine</text>
        <dbReference type="Rhea" id="RHEA:59620"/>
        <dbReference type="ChEBI" id="CHEBI:15377"/>
        <dbReference type="ChEBI" id="CHEBI:32551"/>
        <dbReference type="ChEBI" id="CHEBI:59888"/>
        <dbReference type="ChEBI" id="CHEBI:143159"/>
        <dbReference type="EC" id="3.4.13.4"/>
    </reaction>
    <physiologicalReaction direction="left-to-right" evidence="4">
        <dbReference type="Rhea" id="RHEA:59621"/>
    </physiologicalReaction>
</comment>
<comment type="catalytic activity">
    <reaction evidence="1">
        <text>N(2)-(4-aminobutanoyl)-L-ornithine + H2O = 4-aminobutanoate + L-ornithine</text>
        <dbReference type="Rhea" id="RHEA:59624"/>
        <dbReference type="ChEBI" id="CHEBI:15377"/>
        <dbReference type="ChEBI" id="CHEBI:46911"/>
        <dbReference type="ChEBI" id="CHEBI:59888"/>
        <dbReference type="ChEBI" id="CHEBI:143160"/>
        <dbReference type="EC" id="3.4.13.4"/>
    </reaction>
    <physiologicalReaction direction="left-to-right" evidence="4">
        <dbReference type="Rhea" id="RHEA:59625"/>
    </physiologicalReaction>
</comment>
<comment type="catalytic activity">
    <reaction evidence="1">
        <text>N(2)-(4-aminobutanoyl)-L-arginine + H2O = 4-aminobutanoate + L-arginine</text>
        <dbReference type="Rhea" id="RHEA:59628"/>
        <dbReference type="ChEBI" id="CHEBI:15377"/>
        <dbReference type="ChEBI" id="CHEBI:32682"/>
        <dbReference type="ChEBI" id="CHEBI:59888"/>
        <dbReference type="ChEBI" id="CHEBI:143158"/>
        <dbReference type="EC" id="3.4.13.4"/>
    </reaction>
    <physiologicalReaction direction="left-to-right" evidence="4">
        <dbReference type="Rhea" id="RHEA:59629"/>
    </physiologicalReaction>
</comment>
<comment type="biophysicochemical properties">
    <kinetics>
        <KM evidence="1">5.4 mM for beta-alanyl-L-lysine</KM>
        <KM evidence="1">6.5 mM for beta-alanyl-L-ornithine</KM>
        <Vmax evidence="1">0.3 umol/min/mg enzyme toward beta-alanyl-L-lysine</Vmax>
        <Vmax evidence="1">0.43 umol/min/mg enzyme toward beta-alanyl-L-ornithine</Vmax>
    </kinetics>
</comment>
<comment type="interaction">
    <interactant intactId="EBI-11339910">
        <id>Q8IYS1</id>
    </interactant>
    <interactant intactId="EBI-11156432">
        <id>Q9Y5P4-2</id>
        <label>CERT1</label>
    </interactant>
    <organismsDiffer>false</organismsDiffer>
    <experiments>3</experiments>
</comment>
<comment type="interaction">
    <interactant intactId="EBI-11339910">
        <id>Q8IYS1</id>
    </interactant>
    <interactant intactId="EBI-741032">
        <id>Q8NE01</id>
        <label>CNNM3</label>
    </interactant>
    <organismsDiffer>false</organismsDiffer>
    <experiments>3</experiments>
</comment>
<comment type="interaction">
    <interactant intactId="EBI-11339910">
        <id>Q8IYS1</id>
    </interactant>
    <interactant intactId="EBI-9090939">
        <id>Q5D0E6-2</id>
        <label>DALRD3</label>
    </interactant>
    <organismsDiffer>false</organismsDiffer>
    <experiments>3</experiments>
</comment>
<comment type="interaction">
    <interactant intactId="EBI-11339910">
        <id>Q8IYS1</id>
    </interactant>
    <interactant intactId="EBI-742054">
        <id>Q96D03</id>
        <label>DDIT4L</label>
    </interactant>
    <organismsDiffer>false</organismsDiffer>
    <experiments>3</experiments>
</comment>
<comment type="interaction">
    <interactant intactId="EBI-11339910">
        <id>Q8IYS1</id>
    </interactant>
    <interactant intactId="EBI-1055336">
        <id>Q9NVH1</id>
        <label>DNAJC11</label>
    </interactant>
    <organismsDiffer>false</organismsDiffer>
    <experiments>3</experiments>
</comment>
<comment type="interaction">
    <interactant intactId="EBI-11339910">
        <id>Q8IYS1</id>
    </interactant>
    <interactant intactId="EBI-946972">
        <id>Q9UM22</id>
        <label>EPDR1</label>
    </interactant>
    <organismsDiffer>false</organismsDiffer>
    <experiments>3</experiments>
</comment>
<comment type="interaction">
    <interactant intactId="EBI-11339910">
        <id>Q8IYS1</id>
    </interactant>
    <interactant intactId="EBI-11956675">
        <id>Q9GZV7</id>
        <label>HAPLN2</label>
    </interactant>
    <organismsDiffer>false</organismsDiffer>
    <experiments>3</experiments>
</comment>
<comment type="interaction">
    <interactant intactId="EBI-11339910">
        <id>Q8IYS1</id>
    </interactant>
    <interactant intactId="EBI-746662">
        <id>P23276</id>
        <label>KEL</label>
    </interactant>
    <organismsDiffer>false</organismsDiffer>
    <experiments>3</experiments>
</comment>
<comment type="interaction">
    <interactant intactId="EBI-11339910">
        <id>Q8IYS1</id>
    </interactant>
    <interactant intactId="EBI-2949715">
        <id>O95678</id>
        <label>KRT75</label>
    </interactant>
    <organismsDiffer>false</organismsDiffer>
    <experiments>3</experiments>
</comment>
<comment type="interaction">
    <interactant intactId="EBI-11339910">
        <id>Q8IYS1</id>
    </interactant>
    <interactant intactId="EBI-3957672">
        <id>Q6PEX3</id>
        <label>KRTAP26-1</label>
    </interactant>
    <organismsDiffer>false</organismsDiffer>
    <experiments>3</experiments>
</comment>
<comment type="interaction">
    <interactant intactId="EBI-11339910">
        <id>Q8IYS1</id>
    </interactant>
    <interactant intactId="EBI-2864512">
        <id>P50221</id>
        <label>MEOX1</label>
    </interactant>
    <organismsDiffer>false</organismsDiffer>
    <experiments>3</experiments>
</comment>
<comment type="interaction">
    <interactant intactId="EBI-11339910">
        <id>Q8IYS1</id>
    </interactant>
    <interactant intactId="EBI-5662487">
        <id>Q8TDC0</id>
        <label>MYOZ3</label>
    </interactant>
    <organismsDiffer>false</organismsDiffer>
    <experiments>3</experiments>
</comment>
<comment type="interaction">
    <interactant intactId="EBI-11339910">
        <id>Q8IYS1</id>
    </interactant>
    <interactant intactId="EBI-12126220">
        <id>Q93015-2</id>
        <label>NAA80</label>
    </interactant>
    <organismsDiffer>false</organismsDiffer>
    <experiments>3</experiments>
</comment>
<comment type="interaction">
    <interactant intactId="EBI-11339910">
        <id>Q8IYS1</id>
    </interactant>
    <interactant intactId="EBI-11339910">
        <id>Q8IYS1</id>
        <label>PM20D2</label>
    </interactant>
    <organismsDiffer>false</organismsDiffer>
    <experiments>3</experiments>
</comment>
<comment type="interaction">
    <interactant intactId="EBI-11339910">
        <id>Q8IYS1</id>
    </interactant>
    <interactant intactId="EBI-12029004">
        <id>P78424</id>
        <label>POU6F2</label>
    </interactant>
    <organismsDiffer>false</organismsDiffer>
    <experiments>3</experiments>
</comment>
<comment type="interaction">
    <interactant intactId="EBI-11339910">
        <id>Q8IYS1</id>
    </interactant>
    <interactant intactId="EBI-359352">
        <id>P25786</id>
        <label>PSMA1</label>
    </interactant>
    <organismsDiffer>false</organismsDiffer>
    <experiments>3</experiments>
</comment>
<comment type="interaction">
    <interactant intactId="EBI-11339910">
        <id>Q8IYS1</id>
    </interactant>
    <interactant intactId="EBI-10829018">
        <id>Q04864-2</id>
        <label>REL</label>
    </interactant>
    <organismsDiffer>false</organismsDiffer>
    <experiments>3</experiments>
</comment>
<comment type="interaction">
    <interactant intactId="EBI-11339910">
        <id>Q8IYS1</id>
    </interactant>
    <interactant intactId="EBI-7358493">
        <id>O14924</id>
        <label>RGS12</label>
    </interactant>
    <organismsDiffer>false</organismsDiffer>
    <experiments>3</experiments>
</comment>
<comment type="interaction">
    <interactant intactId="EBI-11339910">
        <id>Q8IYS1</id>
    </interactant>
    <interactant intactId="EBI-7996807">
        <id>O75695</id>
        <label>RP2</label>
    </interactant>
    <organismsDiffer>false</organismsDiffer>
    <experiments>3</experiments>
</comment>
<comment type="interaction">
    <interactant intactId="EBI-11339910">
        <id>Q8IYS1</id>
    </interactant>
    <interactant intactId="EBI-6257312">
        <id>Q9BVN2</id>
        <label>RUSC1</label>
    </interactant>
    <organismsDiffer>false</organismsDiffer>
    <experiments>3</experiments>
</comment>
<comment type="interaction">
    <interactant intactId="EBI-11339910">
        <id>Q8IYS1</id>
    </interactant>
    <interactant intactId="EBI-3957636">
        <id>Q8IYX7</id>
        <label>SAXO1</label>
    </interactant>
    <organismsDiffer>false</organismsDiffer>
    <experiments>3</experiments>
</comment>
<comment type="interaction">
    <interactant intactId="EBI-11339910">
        <id>Q8IYS1</id>
    </interactant>
    <interactant intactId="EBI-12372219">
        <id>O15304-2</id>
        <label>SIVA1</label>
    </interactant>
    <organismsDiffer>false</organismsDiffer>
    <experiments>3</experiments>
</comment>
<comment type="interaction">
    <interactant intactId="EBI-11339910">
        <id>Q8IYS1</id>
    </interactant>
    <interactant intactId="EBI-12017416">
        <id>Q9BX59</id>
        <label>TAPBPL</label>
    </interactant>
    <organismsDiffer>false</organismsDiffer>
    <experiments>3</experiments>
</comment>
<comment type="interaction">
    <interactant intactId="EBI-11339910">
        <id>Q8IYS1</id>
    </interactant>
    <interactant intactId="EBI-743494">
        <id>P48775</id>
        <label>TDO2</label>
    </interactant>
    <organismsDiffer>false</organismsDiffer>
    <experiments>3</experiments>
</comment>
<comment type="similarity">
    <text evidence="3">Belongs to the peptidase M20A family.</text>
</comment>
<reference key="1">
    <citation type="journal article" date="2004" name="Nat. Genet.">
        <title>Complete sequencing and characterization of 21,243 full-length human cDNAs.</title>
        <authorList>
            <person name="Ota T."/>
            <person name="Suzuki Y."/>
            <person name="Nishikawa T."/>
            <person name="Otsuki T."/>
            <person name="Sugiyama T."/>
            <person name="Irie R."/>
            <person name="Wakamatsu A."/>
            <person name="Hayashi K."/>
            <person name="Sato H."/>
            <person name="Nagai K."/>
            <person name="Kimura K."/>
            <person name="Makita H."/>
            <person name="Sekine M."/>
            <person name="Obayashi M."/>
            <person name="Nishi T."/>
            <person name="Shibahara T."/>
            <person name="Tanaka T."/>
            <person name="Ishii S."/>
            <person name="Yamamoto J."/>
            <person name="Saito K."/>
            <person name="Kawai Y."/>
            <person name="Isono Y."/>
            <person name="Nakamura Y."/>
            <person name="Nagahari K."/>
            <person name="Murakami K."/>
            <person name="Yasuda T."/>
            <person name="Iwayanagi T."/>
            <person name="Wagatsuma M."/>
            <person name="Shiratori A."/>
            <person name="Sudo H."/>
            <person name="Hosoiri T."/>
            <person name="Kaku Y."/>
            <person name="Kodaira H."/>
            <person name="Kondo H."/>
            <person name="Sugawara M."/>
            <person name="Takahashi M."/>
            <person name="Kanda K."/>
            <person name="Yokoi T."/>
            <person name="Furuya T."/>
            <person name="Kikkawa E."/>
            <person name="Omura Y."/>
            <person name="Abe K."/>
            <person name="Kamihara K."/>
            <person name="Katsuta N."/>
            <person name="Sato K."/>
            <person name="Tanikawa M."/>
            <person name="Yamazaki M."/>
            <person name="Ninomiya K."/>
            <person name="Ishibashi T."/>
            <person name="Yamashita H."/>
            <person name="Murakawa K."/>
            <person name="Fujimori K."/>
            <person name="Tanai H."/>
            <person name="Kimata M."/>
            <person name="Watanabe M."/>
            <person name="Hiraoka S."/>
            <person name="Chiba Y."/>
            <person name="Ishida S."/>
            <person name="Ono Y."/>
            <person name="Takiguchi S."/>
            <person name="Watanabe S."/>
            <person name="Yosida M."/>
            <person name="Hotuta T."/>
            <person name="Kusano J."/>
            <person name="Kanehori K."/>
            <person name="Takahashi-Fujii A."/>
            <person name="Hara H."/>
            <person name="Tanase T.-O."/>
            <person name="Nomura Y."/>
            <person name="Togiya S."/>
            <person name="Komai F."/>
            <person name="Hara R."/>
            <person name="Takeuchi K."/>
            <person name="Arita M."/>
            <person name="Imose N."/>
            <person name="Musashino K."/>
            <person name="Yuuki H."/>
            <person name="Oshima A."/>
            <person name="Sasaki N."/>
            <person name="Aotsuka S."/>
            <person name="Yoshikawa Y."/>
            <person name="Matsunawa H."/>
            <person name="Ichihara T."/>
            <person name="Shiohata N."/>
            <person name="Sano S."/>
            <person name="Moriya S."/>
            <person name="Momiyama H."/>
            <person name="Satoh N."/>
            <person name="Takami S."/>
            <person name="Terashima Y."/>
            <person name="Suzuki O."/>
            <person name="Nakagawa S."/>
            <person name="Senoh A."/>
            <person name="Mizoguchi H."/>
            <person name="Goto Y."/>
            <person name="Shimizu F."/>
            <person name="Wakebe H."/>
            <person name="Hishigaki H."/>
            <person name="Watanabe T."/>
            <person name="Sugiyama A."/>
            <person name="Takemoto M."/>
            <person name="Kawakami B."/>
            <person name="Yamazaki M."/>
            <person name="Watanabe K."/>
            <person name="Kumagai A."/>
            <person name="Itakura S."/>
            <person name="Fukuzumi Y."/>
            <person name="Fujimori Y."/>
            <person name="Komiyama M."/>
            <person name="Tashiro H."/>
            <person name="Tanigami A."/>
            <person name="Fujiwara T."/>
            <person name="Ono T."/>
            <person name="Yamada K."/>
            <person name="Fujii Y."/>
            <person name="Ozaki K."/>
            <person name="Hirao M."/>
            <person name="Ohmori Y."/>
            <person name="Kawabata A."/>
            <person name="Hikiji T."/>
            <person name="Kobatake N."/>
            <person name="Inagaki H."/>
            <person name="Ikema Y."/>
            <person name="Okamoto S."/>
            <person name="Okitani R."/>
            <person name="Kawakami T."/>
            <person name="Noguchi S."/>
            <person name="Itoh T."/>
            <person name="Shigeta K."/>
            <person name="Senba T."/>
            <person name="Matsumura K."/>
            <person name="Nakajima Y."/>
            <person name="Mizuno T."/>
            <person name="Morinaga M."/>
            <person name="Sasaki M."/>
            <person name="Togashi T."/>
            <person name="Oyama M."/>
            <person name="Hata H."/>
            <person name="Watanabe M."/>
            <person name="Komatsu T."/>
            <person name="Mizushima-Sugano J."/>
            <person name="Satoh T."/>
            <person name="Shirai Y."/>
            <person name="Takahashi Y."/>
            <person name="Nakagawa K."/>
            <person name="Okumura K."/>
            <person name="Nagase T."/>
            <person name="Nomura N."/>
            <person name="Kikuchi H."/>
            <person name="Masuho Y."/>
            <person name="Yamashita R."/>
            <person name="Nakai K."/>
            <person name="Yada T."/>
            <person name="Nakamura Y."/>
            <person name="Ohara O."/>
            <person name="Isogai T."/>
            <person name="Sugano S."/>
        </authorList>
    </citation>
    <scope>NUCLEOTIDE SEQUENCE [LARGE SCALE MRNA]</scope>
    <source>
        <tissue>Testis</tissue>
    </source>
</reference>
<reference key="2">
    <citation type="journal article" date="2003" name="Nature">
        <title>The DNA sequence and analysis of human chromosome 6.</title>
        <authorList>
            <person name="Mungall A.J."/>
            <person name="Palmer S.A."/>
            <person name="Sims S.K."/>
            <person name="Edwards C.A."/>
            <person name="Ashurst J.L."/>
            <person name="Wilming L."/>
            <person name="Jones M.C."/>
            <person name="Horton R."/>
            <person name="Hunt S.E."/>
            <person name="Scott C.E."/>
            <person name="Gilbert J.G.R."/>
            <person name="Clamp M.E."/>
            <person name="Bethel G."/>
            <person name="Milne S."/>
            <person name="Ainscough R."/>
            <person name="Almeida J.P."/>
            <person name="Ambrose K.D."/>
            <person name="Andrews T.D."/>
            <person name="Ashwell R.I.S."/>
            <person name="Babbage A.K."/>
            <person name="Bagguley C.L."/>
            <person name="Bailey J."/>
            <person name="Banerjee R."/>
            <person name="Barker D.J."/>
            <person name="Barlow K.F."/>
            <person name="Bates K."/>
            <person name="Beare D.M."/>
            <person name="Beasley H."/>
            <person name="Beasley O."/>
            <person name="Bird C.P."/>
            <person name="Blakey S.E."/>
            <person name="Bray-Allen S."/>
            <person name="Brook J."/>
            <person name="Brown A.J."/>
            <person name="Brown J.Y."/>
            <person name="Burford D.C."/>
            <person name="Burrill W."/>
            <person name="Burton J."/>
            <person name="Carder C."/>
            <person name="Carter N.P."/>
            <person name="Chapman J.C."/>
            <person name="Clark S.Y."/>
            <person name="Clark G."/>
            <person name="Clee C.M."/>
            <person name="Clegg S."/>
            <person name="Cobley V."/>
            <person name="Collier R.E."/>
            <person name="Collins J.E."/>
            <person name="Colman L.K."/>
            <person name="Corby N.R."/>
            <person name="Coville G.J."/>
            <person name="Culley K.M."/>
            <person name="Dhami P."/>
            <person name="Davies J."/>
            <person name="Dunn M."/>
            <person name="Earthrowl M.E."/>
            <person name="Ellington A.E."/>
            <person name="Evans K.A."/>
            <person name="Faulkner L."/>
            <person name="Francis M.D."/>
            <person name="Frankish A."/>
            <person name="Frankland J."/>
            <person name="French L."/>
            <person name="Garner P."/>
            <person name="Garnett J."/>
            <person name="Ghori M.J."/>
            <person name="Gilby L.M."/>
            <person name="Gillson C.J."/>
            <person name="Glithero R.J."/>
            <person name="Grafham D.V."/>
            <person name="Grant M."/>
            <person name="Gribble S."/>
            <person name="Griffiths C."/>
            <person name="Griffiths M.N.D."/>
            <person name="Hall R."/>
            <person name="Halls K.S."/>
            <person name="Hammond S."/>
            <person name="Harley J.L."/>
            <person name="Hart E.A."/>
            <person name="Heath P.D."/>
            <person name="Heathcott R."/>
            <person name="Holmes S.J."/>
            <person name="Howden P.J."/>
            <person name="Howe K.L."/>
            <person name="Howell G.R."/>
            <person name="Huckle E."/>
            <person name="Humphray S.J."/>
            <person name="Humphries M.D."/>
            <person name="Hunt A.R."/>
            <person name="Johnson C.M."/>
            <person name="Joy A.A."/>
            <person name="Kay M."/>
            <person name="Keenan S.J."/>
            <person name="Kimberley A.M."/>
            <person name="King A."/>
            <person name="Laird G.K."/>
            <person name="Langford C."/>
            <person name="Lawlor S."/>
            <person name="Leongamornlert D.A."/>
            <person name="Leversha M."/>
            <person name="Lloyd C.R."/>
            <person name="Lloyd D.M."/>
            <person name="Loveland J.E."/>
            <person name="Lovell J."/>
            <person name="Martin S."/>
            <person name="Mashreghi-Mohammadi M."/>
            <person name="Maslen G.L."/>
            <person name="Matthews L."/>
            <person name="McCann O.T."/>
            <person name="McLaren S.J."/>
            <person name="McLay K."/>
            <person name="McMurray A."/>
            <person name="Moore M.J.F."/>
            <person name="Mullikin J.C."/>
            <person name="Niblett D."/>
            <person name="Nickerson T."/>
            <person name="Novik K.L."/>
            <person name="Oliver K."/>
            <person name="Overton-Larty E.K."/>
            <person name="Parker A."/>
            <person name="Patel R."/>
            <person name="Pearce A.V."/>
            <person name="Peck A.I."/>
            <person name="Phillimore B.J.C.T."/>
            <person name="Phillips S."/>
            <person name="Plumb R.W."/>
            <person name="Porter K.M."/>
            <person name="Ramsey Y."/>
            <person name="Ranby S.A."/>
            <person name="Rice C.M."/>
            <person name="Ross M.T."/>
            <person name="Searle S.M."/>
            <person name="Sehra H.K."/>
            <person name="Sheridan E."/>
            <person name="Skuce C.D."/>
            <person name="Smith S."/>
            <person name="Smith M."/>
            <person name="Spraggon L."/>
            <person name="Squares S.L."/>
            <person name="Steward C.A."/>
            <person name="Sycamore N."/>
            <person name="Tamlyn-Hall G."/>
            <person name="Tester J."/>
            <person name="Theaker A.J."/>
            <person name="Thomas D.W."/>
            <person name="Thorpe A."/>
            <person name="Tracey A."/>
            <person name="Tromans A."/>
            <person name="Tubby B."/>
            <person name="Wall M."/>
            <person name="Wallis J.M."/>
            <person name="West A.P."/>
            <person name="White S.S."/>
            <person name="Whitehead S.L."/>
            <person name="Whittaker H."/>
            <person name="Wild A."/>
            <person name="Willey D.J."/>
            <person name="Wilmer T.E."/>
            <person name="Wood J.M."/>
            <person name="Wray P.W."/>
            <person name="Wyatt J.C."/>
            <person name="Young L."/>
            <person name="Younger R.M."/>
            <person name="Bentley D.R."/>
            <person name="Coulson A."/>
            <person name="Durbin R.M."/>
            <person name="Hubbard T."/>
            <person name="Sulston J.E."/>
            <person name="Dunham I."/>
            <person name="Rogers J."/>
            <person name="Beck S."/>
        </authorList>
    </citation>
    <scope>NUCLEOTIDE SEQUENCE [LARGE SCALE GENOMIC DNA]</scope>
</reference>
<reference key="3">
    <citation type="submission" date="2005-09" db="EMBL/GenBank/DDBJ databases">
        <authorList>
            <person name="Mural R.J."/>
            <person name="Istrail S."/>
            <person name="Sutton G.G."/>
            <person name="Florea L."/>
            <person name="Halpern A.L."/>
            <person name="Mobarry C.M."/>
            <person name="Lippert R."/>
            <person name="Walenz B."/>
            <person name="Shatkay H."/>
            <person name="Dew I."/>
            <person name="Miller J.R."/>
            <person name="Flanigan M.J."/>
            <person name="Edwards N.J."/>
            <person name="Bolanos R."/>
            <person name="Fasulo D."/>
            <person name="Halldorsson B.V."/>
            <person name="Hannenhalli S."/>
            <person name="Turner R."/>
            <person name="Yooseph S."/>
            <person name="Lu F."/>
            <person name="Nusskern D.R."/>
            <person name="Shue B.C."/>
            <person name="Zheng X.H."/>
            <person name="Zhong F."/>
            <person name="Delcher A.L."/>
            <person name="Huson D.H."/>
            <person name="Kravitz S.A."/>
            <person name="Mouchard L."/>
            <person name="Reinert K."/>
            <person name="Remington K.A."/>
            <person name="Clark A.G."/>
            <person name="Waterman M.S."/>
            <person name="Eichler E.E."/>
            <person name="Adams M.D."/>
            <person name="Hunkapiller M.W."/>
            <person name="Myers E.W."/>
            <person name="Venter J.C."/>
        </authorList>
    </citation>
    <scope>NUCLEOTIDE SEQUENCE [LARGE SCALE GENOMIC DNA]</scope>
</reference>
<reference key="4">
    <citation type="journal article" date="2004" name="Genome Res.">
        <title>The status, quality, and expansion of the NIH full-length cDNA project: the Mammalian Gene Collection (MGC).</title>
        <authorList>
            <consortium name="The MGC Project Team"/>
        </authorList>
    </citation>
    <scope>NUCLEOTIDE SEQUENCE [LARGE SCALE MRNA]</scope>
    <source>
        <tissue>Brain</tissue>
    </source>
</reference>
<reference key="5">
    <citation type="journal article" date="2007" name="BMC Genomics">
        <title>The full-ORF clone resource of the German cDNA consortium.</title>
        <authorList>
            <person name="Bechtel S."/>
            <person name="Rosenfelder H."/>
            <person name="Duda A."/>
            <person name="Schmidt C.P."/>
            <person name="Ernst U."/>
            <person name="Wellenreuther R."/>
            <person name="Mehrle A."/>
            <person name="Schuster C."/>
            <person name="Bahr A."/>
            <person name="Bloecker H."/>
            <person name="Heubner D."/>
            <person name="Hoerlein A."/>
            <person name="Michel G."/>
            <person name="Wedler H."/>
            <person name="Koehrer K."/>
            <person name="Ottenwaelder B."/>
            <person name="Poustka A."/>
            <person name="Wiemann S."/>
            <person name="Schupp I."/>
        </authorList>
    </citation>
    <scope>NUCLEOTIDE SEQUENCE [LARGE SCALE MRNA] OF 371-436</scope>
    <source>
        <tissue>Salivary gland</tissue>
    </source>
</reference>
<reference key="6">
    <citation type="journal article" date="2011" name="BMC Syst. Biol.">
        <title>Initial characterization of the human central proteome.</title>
        <authorList>
            <person name="Burkard T.R."/>
            <person name="Planyavsky M."/>
            <person name="Kaupe I."/>
            <person name="Breitwieser F.P."/>
            <person name="Buerckstuemmer T."/>
            <person name="Bennett K.L."/>
            <person name="Superti-Furga G."/>
            <person name="Colinge J."/>
        </authorList>
    </citation>
    <scope>IDENTIFICATION BY MASS SPECTROMETRY [LARGE SCALE ANALYSIS]</scope>
</reference>
<reference key="7">
    <citation type="journal article" date="2014" name="J. Biol. Chem.">
        <title>Metabolite proofreading in carnosine and homocarnosine synthesis: molecular identification of PM20D2 as beta-alanyl-lysine dipeptidase.</title>
        <authorList>
            <person name="Veiga-da-Cunha M."/>
            <person name="Chevalier N."/>
            <person name="Stroobant V."/>
            <person name="Vertommen D."/>
            <person name="Van Schaftingen E."/>
        </authorList>
    </citation>
    <scope>FUNCTION</scope>
    <scope>CATALYTIC ACTIVITY</scope>
    <scope>BIOPHYSICOCHEMICAL PROPERTIES</scope>
</reference>